<feature type="chain" id="PRO_0000184735" description="Pyrrolidone-carboxylate peptidase">
    <location>
        <begin position="1"/>
        <end position="212"/>
    </location>
</feature>
<feature type="active site" evidence="1">
    <location>
        <position position="78"/>
    </location>
</feature>
<feature type="active site" evidence="1">
    <location>
        <position position="141"/>
    </location>
</feature>
<feature type="active site" evidence="1">
    <location>
        <position position="165"/>
    </location>
</feature>
<sequence>MHILVTGFAPFDNQNINPSWEAVTQLEDIIGTHTIDKLKLPTSFKKVDNIINKTLASNHYDVVLAIGQAGGRNAITPERVAINIDDARIPDNDDFQPIDQAIHLDGAPAYFSNLPVKAMTQSIINQGLPGALSNSAGTFVCNHTLYHLGYLQDKHYPHLRFGFIHVPYIPEQVIGKPDTPSMPLEKIVAGLTAAIEAISNDEDLHLALGTTE</sequence>
<gene>
    <name evidence="1" type="primary">pcp</name>
    <name type="ordered locus">SAS2576</name>
</gene>
<comment type="function">
    <text evidence="1">Removes 5-oxoproline from various penultimate amino acid residues except L-proline.</text>
</comment>
<comment type="catalytic activity">
    <reaction evidence="1">
        <text>Release of an N-terminal pyroglutamyl group from a polypeptide, the second amino acid generally not being Pro.</text>
        <dbReference type="EC" id="3.4.19.3"/>
    </reaction>
</comment>
<comment type="subunit">
    <text evidence="1">Homotetramer.</text>
</comment>
<comment type="subcellular location">
    <subcellularLocation>
        <location evidence="1">Cytoplasm</location>
    </subcellularLocation>
</comment>
<comment type="similarity">
    <text evidence="1">Belongs to the peptidase C15 family.</text>
</comment>
<reference key="1">
    <citation type="journal article" date="2004" name="Proc. Natl. Acad. Sci. U.S.A.">
        <title>Complete genomes of two clinical Staphylococcus aureus strains: evidence for the rapid evolution of virulence and drug resistance.</title>
        <authorList>
            <person name="Holden M.T.G."/>
            <person name="Feil E.J."/>
            <person name="Lindsay J.A."/>
            <person name="Peacock S.J."/>
            <person name="Day N.P.J."/>
            <person name="Enright M.C."/>
            <person name="Foster T.J."/>
            <person name="Moore C.E."/>
            <person name="Hurst L."/>
            <person name="Atkin R."/>
            <person name="Barron A."/>
            <person name="Bason N."/>
            <person name="Bentley S.D."/>
            <person name="Chillingworth C."/>
            <person name="Chillingworth T."/>
            <person name="Churcher C."/>
            <person name="Clark L."/>
            <person name="Corton C."/>
            <person name="Cronin A."/>
            <person name="Doggett J."/>
            <person name="Dowd L."/>
            <person name="Feltwell T."/>
            <person name="Hance Z."/>
            <person name="Harris B."/>
            <person name="Hauser H."/>
            <person name="Holroyd S."/>
            <person name="Jagels K."/>
            <person name="James K.D."/>
            <person name="Lennard N."/>
            <person name="Line A."/>
            <person name="Mayes R."/>
            <person name="Moule S."/>
            <person name="Mungall K."/>
            <person name="Ormond D."/>
            <person name="Quail M.A."/>
            <person name="Rabbinowitsch E."/>
            <person name="Rutherford K.M."/>
            <person name="Sanders M."/>
            <person name="Sharp S."/>
            <person name="Simmonds M."/>
            <person name="Stevens K."/>
            <person name="Whitehead S."/>
            <person name="Barrell B.G."/>
            <person name="Spratt B.G."/>
            <person name="Parkhill J."/>
        </authorList>
    </citation>
    <scope>NUCLEOTIDE SEQUENCE [LARGE SCALE GENOMIC DNA]</scope>
    <source>
        <strain>MSSA476</strain>
    </source>
</reference>
<accession>Q6G5Y4</accession>
<name>PCP_STAAS</name>
<protein>
    <recommendedName>
        <fullName evidence="1">Pyrrolidone-carboxylate peptidase</fullName>
        <ecNumber evidence="1">3.4.19.3</ecNumber>
    </recommendedName>
    <alternativeName>
        <fullName evidence="1">5-oxoprolyl-peptidase</fullName>
    </alternativeName>
    <alternativeName>
        <fullName evidence="1">Pyroglutamyl-peptidase I</fullName>
        <shortName evidence="1">PGP-I</shortName>
        <shortName evidence="1">Pyrase</shortName>
    </alternativeName>
</protein>
<keyword id="KW-0963">Cytoplasm</keyword>
<keyword id="KW-0378">Hydrolase</keyword>
<keyword id="KW-0645">Protease</keyword>
<keyword id="KW-0788">Thiol protease</keyword>
<organism>
    <name type="scientific">Staphylococcus aureus (strain MSSA476)</name>
    <dbReference type="NCBI Taxonomy" id="282459"/>
    <lineage>
        <taxon>Bacteria</taxon>
        <taxon>Bacillati</taxon>
        <taxon>Bacillota</taxon>
        <taxon>Bacilli</taxon>
        <taxon>Bacillales</taxon>
        <taxon>Staphylococcaceae</taxon>
        <taxon>Staphylococcus</taxon>
    </lineage>
</organism>
<evidence type="ECO:0000255" key="1">
    <source>
        <dbReference type="HAMAP-Rule" id="MF_00417"/>
    </source>
</evidence>
<proteinExistence type="inferred from homology"/>
<dbReference type="EC" id="3.4.19.3" evidence="1"/>
<dbReference type="EMBL" id="BX571857">
    <property type="protein sequence ID" value="CAG44393.1"/>
    <property type="molecule type" value="Genomic_DNA"/>
</dbReference>
<dbReference type="RefSeq" id="WP_000547833.1">
    <property type="nucleotide sequence ID" value="NC_002953.3"/>
</dbReference>
<dbReference type="SMR" id="Q6G5Y4"/>
<dbReference type="MEROPS" id="C15.001"/>
<dbReference type="KEGG" id="sas:SAS2576"/>
<dbReference type="HOGENOM" id="CLU_043960_4_0_9"/>
<dbReference type="GO" id="GO:0005829">
    <property type="term" value="C:cytosol"/>
    <property type="evidence" value="ECO:0007669"/>
    <property type="project" value="InterPro"/>
</dbReference>
<dbReference type="GO" id="GO:0016920">
    <property type="term" value="F:pyroglutamyl-peptidase activity"/>
    <property type="evidence" value="ECO:0007669"/>
    <property type="project" value="UniProtKB-UniRule"/>
</dbReference>
<dbReference type="GO" id="GO:0006508">
    <property type="term" value="P:proteolysis"/>
    <property type="evidence" value="ECO:0007669"/>
    <property type="project" value="UniProtKB-KW"/>
</dbReference>
<dbReference type="CDD" id="cd00501">
    <property type="entry name" value="Peptidase_C15"/>
    <property type="match status" value="1"/>
</dbReference>
<dbReference type="FunFam" id="3.40.630.20:FF:000001">
    <property type="entry name" value="Pyrrolidone-carboxylate peptidase"/>
    <property type="match status" value="1"/>
</dbReference>
<dbReference type="Gene3D" id="3.40.630.20">
    <property type="entry name" value="Peptidase C15, pyroglutamyl peptidase I-like"/>
    <property type="match status" value="1"/>
</dbReference>
<dbReference type="HAMAP" id="MF_00417">
    <property type="entry name" value="Pyrrolid_peptidase"/>
    <property type="match status" value="1"/>
</dbReference>
<dbReference type="InterPro" id="IPR000816">
    <property type="entry name" value="Peptidase_C15"/>
</dbReference>
<dbReference type="InterPro" id="IPR016125">
    <property type="entry name" value="Peptidase_C15-like"/>
</dbReference>
<dbReference type="InterPro" id="IPR036440">
    <property type="entry name" value="Peptidase_C15-like_sf"/>
</dbReference>
<dbReference type="InterPro" id="IPR029762">
    <property type="entry name" value="PGP-I_bact-type"/>
</dbReference>
<dbReference type="InterPro" id="IPR033694">
    <property type="entry name" value="PGPEP1_Cys_AS"/>
</dbReference>
<dbReference type="InterPro" id="IPR033693">
    <property type="entry name" value="PGPEP1_Glu_AS"/>
</dbReference>
<dbReference type="NCBIfam" id="NF009676">
    <property type="entry name" value="PRK13197.1"/>
    <property type="match status" value="1"/>
</dbReference>
<dbReference type="NCBIfam" id="TIGR00504">
    <property type="entry name" value="pyro_pdase"/>
    <property type="match status" value="1"/>
</dbReference>
<dbReference type="PANTHER" id="PTHR23402">
    <property type="entry name" value="PROTEASE FAMILY C15 PYROGLUTAMYL-PEPTIDASE I-RELATED"/>
    <property type="match status" value="1"/>
</dbReference>
<dbReference type="PANTHER" id="PTHR23402:SF1">
    <property type="entry name" value="PYROGLUTAMYL-PEPTIDASE I"/>
    <property type="match status" value="1"/>
</dbReference>
<dbReference type="Pfam" id="PF01470">
    <property type="entry name" value="Peptidase_C15"/>
    <property type="match status" value="1"/>
</dbReference>
<dbReference type="PIRSF" id="PIRSF015592">
    <property type="entry name" value="Prld-crbxl_pptds"/>
    <property type="match status" value="1"/>
</dbReference>
<dbReference type="PRINTS" id="PR00706">
    <property type="entry name" value="PYROGLUPTASE"/>
</dbReference>
<dbReference type="SUPFAM" id="SSF53182">
    <property type="entry name" value="Pyrrolidone carboxyl peptidase (pyroglutamate aminopeptidase)"/>
    <property type="match status" value="1"/>
</dbReference>
<dbReference type="PROSITE" id="PS01334">
    <property type="entry name" value="PYRASE_CYS"/>
    <property type="match status" value="1"/>
</dbReference>
<dbReference type="PROSITE" id="PS01333">
    <property type="entry name" value="PYRASE_GLU"/>
    <property type="match status" value="1"/>
</dbReference>